<organism>
    <name type="scientific">Penaeus vannamei</name>
    <name type="common">Whiteleg shrimp</name>
    <name type="synonym">Litopenaeus vannamei</name>
    <dbReference type="NCBI Taxonomy" id="6689"/>
    <lineage>
        <taxon>Eukaryota</taxon>
        <taxon>Metazoa</taxon>
        <taxon>Ecdysozoa</taxon>
        <taxon>Arthropoda</taxon>
        <taxon>Crustacea</taxon>
        <taxon>Multicrustacea</taxon>
        <taxon>Malacostraca</taxon>
        <taxon>Eumalacostraca</taxon>
        <taxon>Eucarida</taxon>
        <taxon>Decapoda</taxon>
        <taxon>Dendrobranchiata</taxon>
        <taxon>Penaeoidea</taxon>
        <taxon>Penaeidae</taxon>
        <taxon>Penaeus</taxon>
    </lineage>
</organism>
<protein>
    <recommendedName>
        <fullName>Beta-1,3-glucan-binding protein</fullName>
        <shortName>BGBP</shortName>
    </recommendedName>
    <alternativeName>
        <fullName>Beta-1,3-glucan recognition protein</fullName>
        <shortName>BetaGRP</shortName>
    </alternativeName>
    <alternativeName>
        <fullName>BetaGBP-HDL</fullName>
    </alternativeName>
    <alternativeName>
        <fullName>High density lipoprotein</fullName>
    </alternativeName>
</protein>
<proteinExistence type="evidence at protein level"/>
<comment type="function">
    <text evidence="2">Involved in the recognition of invading microorganisms. Binds specifically to beta-1,3-glucan and activates the prophenoloxidase cascade.</text>
</comment>
<comment type="subunit">
    <text evidence="2">Monomer.</text>
</comment>
<comment type="subcellular location">
    <subcellularLocation>
        <location evidence="2">Secreted</location>
    </subcellularLocation>
</comment>
<comment type="tissue specificity">
    <text evidence="2">Expressed in the hepatopancreas and secreted into the hemolymph. Expressed at lower levels in muscle, pleopod and gill tissue.</text>
</comment>
<comment type="similarity">
    <text evidence="3">Belongs to the glycosyl hydrolase 16 family.</text>
</comment>
<name>BGBP_PENVA</name>
<evidence type="ECO:0000255" key="1"/>
<evidence type="ECO:0000269" key="2">
    <source>
    </source>
</evidence>
<evidence type="ECO:0000305" key="3"/>
<dbReference type="EMBL" id="AY249858">
    <property type="protein sequence ID" value="AAO92933.1"/>
    <property type="molecule type" value="mRNA"/>
</dbReference>
<dbReference type="OrthoDB" id="6384109at2759"/>
<dbReference type="GO" id="GO:0005576">
    <property type="term" value="C:extracellular region"/>
    <property type="evidence" value="ECO:0000314"/>
    <property type="project" value="UniProtKB"/>
</dbReference>
<dbReference type="GO" id="GO:0038187">
    <property type="term" value="F:pattern recognition receptor activity"/>
    <property type="evidence" value="ECO:0000314"/>
    <property type="project" value="UniProtKB"/>
</dbReference>
<dbReference type="GO" id="GO:0002752">
    <property type="term" value="P:cell surface pattern recognition receptor signaling pathway"/>
    <property type="evidence" value="ECO:0000314"/>
    <property type="project" value="UniProtKB"/>
</dbReference>
<dbReference type="GO" id="GO:0045087">
    <property type="term" value="P:innate immune response"/>
    <property type="evidence" value="ECO:0007669"/>
    <property type="project" value="UniProtKB-KW"/>
</dbReference>
<dbReference type="GO" id="GO:0006869">
    <property type="term" value="P:lipid transport"/>
    <property type="evidence" value="ECO:0007669"/>
    <property type="project" value="UniProtKB-KW"/>
</dbReference>
<dbReference type="GO" id="GO:0045088">
    <property type="term" value="P:regulation of innate immune response"/>
    <property type="evidence" value="ECO:0000314"/>
    <property type="project" value="UniProtKB"/>
</dbReference>
<sequence>MSFDLTTPFDVIKTVSLSARYSWTTSQKGATLNITYNDKNFVLSSSLQLSTRASNITFQATTPFEGFQNSFIEIKYDIDNREELLASRVSVDDHSYSFVVGGYIEDKLAVFKWNLNSPLTGWTDAKFVAKIDLSSENKNLEISLEKEGDLKAIAVSGKFIGSTLDFNLRTPFRGLNNFNVFGSLNRSKRSLEMRMMNDAGQASLAGNFNSLRFNMKTPFERAEQISWEVTKTGEGSYKAEWRRNDNYATFTIEKDVSKQSFDLNIKSEFRGWEILALTGRLDQETKQAYLSGAINEQKITVTGSGSITNKIKFSMTIETPYENYRQVKAQLNYAKRKNAIKLEASSSSSDFHLLWSRSGSGLEAHLIVPNSRQNTEISINLTPTQGKITITSRFEPIRDYLQEYHVNLGQNEITADHIIKLNGHEVFKMDFERNAPEQKVHLEIHTHVAERHTTIHFHREGFSKLNFLFKREVPQYGEKHFKVDITGSGALPQKGALDIVVENTFREPAKTINARVEVDRTGARKKIMLEVSPRQSRVYIFNLEYIADLESPQHGDFTLKITTPNNSPWQNISGNWNVEDPNDATITFTVGNVTYNAKGKLTLRESTMILSSTDPSAENIYLQWKFERNGDTKDYFLKLGRKSRYGMLKLTGTITDIAHVDIEGGFKAGPFMPNEFLFTSMWGKSNGVVTGEGTFDYGNYHGSHRLVKFERNAERKSASFEWSATSNIPQYNSVSVSGNYDFNHKVVIFVVINADGRESKIDINIADINPTSSRNTAMISIPLLGPTFKRTELTVSHDFSHPNRKSISAVAKFGRSESFINAKWNRSDGFDTLEGNIEAKSRFLGDFLINVRYDMSNIADAHAEVDYLRTTTDGDKKEFKLNWTRKSTDDHLENEMVFDSNFETLSHARAYANADYGGIFKLLSGLDWDDKKISLTLEVRKNKISGILTTPFEGFETLEIDLQYKLTGKDKSVKATYQRGDRKASFNMEMSTKGKKGGSFKVDLTTPFEVVKNLHIDGQYENKVAQINYQRNDIQMNFNGKANIKSSKASFDISFTPPSGQNIRIAASYDVQDFIDGTGDEEKELASLSLEFEGNSMDFSLHGFRNDDRLYVMIHGTSSFAVLKMFHLKLDSELNTEARDGTFELTFNDFKFNVSNHFERRANNGYYFRSKIESTLTPLPALIIGLGREGQERIITIGYGEDKEITFSVKGKNNFLSGFSGKVDIPSIGYEGVEYDVDYSFPGDNHLQIKVEIDLNENGQEVEATFFLDSEGIKARLSSAVLGDHSLRVRRSVAPDGFYAEAGLDDYNLKLRGGFKNEDTARGVQLEGEVFGKRFLIDTLFQSEGKRYSEGKLIIHTPFHGMEKMGGLFTWSNQNKKIMAHAELHLPSYTTPTITGEISLDLKKKINGYVTLDVAGEEFTLKCNLAGSSISQGYTGSLEFYTTIPCCITCCGDR</sequence>
<keyword id="KW-0903">Direct protein sequencing</keyword>
<keyword id="KW-0325">Glycoprotein</keyword>
<keyword id="KW-0391">Immunity</keyword>
<keyword id="KW-0399">Innate immunity</keyword>
<keyword id="KW-0445">Lipid transport</keyword>
<keyword id="KW-0964">Secreted</keyword>
<keyword id="KW-0813">Transport</keyword>
<feature type="propeptide" id="PRO_0000002825" evidence="2">
    <location>
        <begin position="1"/>
        <end position="197"/>
    </location>
</feature>
<feature type="chain" id="PRO_0000002826" description="Beta-1,3-glucan-binding protein">
    <location>
        <begin position="198"/>
        <end position="1454"/>
    </location>
</feature>
<feature type="glycosylation site" description="N-linked (GlcNAc...) asparagine" evidence="1">
    <location>
        <position position="33"/>
    </location>
</feature>
<feature type="glycosylation site" description="N-linked (GlcNAc...) asparagine" evidence="1">
    <location>
        <position position="55"/>
    </location>
</feature>
<feature type="glycosylation site" description="N-linked (GlcNAc...) asparagine" evidence="1">
    <location>
        <position position="185"/>
    </location>
</feature>
<feature type="glycosylation site" description="N-linked (GlcNAc...) asparagine" evidence="1">
    <location>
        <position position="571"/>
    </location>
</feature>
<feature type="glycosylation site" description="N-linked (GlcNAc...) asparagine" evidence="1">
    <location>
        <position position="592"/>
    </location>
</feature>
<feature type="glycosylation site" description="N-linked (GlcNAc...) asparagine" evidence="1">
    <location>
        <position position="825"/>
    </location>
</feature>
<feature type="glycosylation site" description="N-linked (GlcNAc...) asparagine" evidence="1">
    <location>
        <position position="882"/>
    </location>
</feature>
<feature type="glycosylation site" description="N-linked (GlcNAc...) asparagine" evidence="1">
    <location>
        <position position="1153"/>
    </location>
</feature>
<feature type="sequence conflict" description="In Ref. 2; AA sequence." evidence="3" ref="2">
    <original>ER</original>
    <variation>VW</variation>
    <location>
        <begin position="220"/>
        <end position="221"/>
    </location>
</feature>
<feature type="sequence conflict" description="In Ref. 1; AA sequence." evidence="3" ref="1">
    <original>D</original>
    <variation>E</variation>
    <location>
        <position position="831"/>
    </location>
</feature>
<reference key="1">
    <citation type="journal article" date="2004" name="Dev. Comp. Immunol.">
        <title>Molecular cloning of a beta-glucan pattern-recognition lipoprotein from the white shrimp Penaeus (Litopenaeus) vannamei: correlations between the deduced amino acid sequence and the native protein structure.</title>
        <authorList>
            <person name="Romo-Figueroa M.G."/>
            <person name="Vargas-Requena C."/>
            <person name="Sotelo-Mundo R.R."/>
            <person name="Vargas-Albores F."/>
            <person name="Higuera-Ciapara I."/>
            <person name="Soderhall K."/>
            <person name="Yepiz-Plascencia G.M."/>
        </authorList>
    </citation>
    <scope>NUCLEOTIDE SEQUENCE [MRNA]</scope>
    <scope>PROTEIN SEQUENCE OF 329-335; 761-772 AND 827-840</scope>
    <source>
        <tissue>Hepatopancreas</tissue>
    </source>
</reference>
<reference key="2">
    <citation type="journal article" date="1997" name="Comp. Biochem. Physiol.">
        <title>Purification and comparison of beta-1,3-glucan binding protein from white shrimp (Penaeus vannamei).</title>
        <authorList>
            <person name="Vargas-Albores F."/>
            <person name="Jimenez-Vega F."/>
            <person name="Yepiz-Plascencia G.M."/>
        </authorList>
    </citation>
    <scope>PROTEIN SEQUENCE OF 198-222</scope>
    <scope>FUNCTION</scope>
    <scope>SUBUNIT</scope>
    <scope>SUBCELLULAR LOCATION</scope>
    <scope>TISSUE SPECIFICITY</scope>
</reference>
<accession>P81182</accession>
<accession>Q86G48</accession>